<protein>
    <recommendedName>
        <fullName evidence="1">Recombination protein RecR</fullName>
    </recommendedName>
</protein>
<reference key="1">
    <citation type="journal article" date="2011" name="J. Bacteriol.">
        <title>Complete genome sequence of the plant growth-promoting endophyte Burkholderia phytofirmans strain PsJN.</title>
        <authorList>
            <person name="Weilharter A."/>
            <person name="Mitter B."/>
            <person name="Shin M.V."/>
            <person name="Chain P.S."/>
            <person name="Nowak J."/>
            <person name="Sessitsch A."/>
        </authorList>
    </citation>
    <scope>NUCLEOTIDE SEQUENCE [LARGE SCALE GENOMIC DNA]</scope>
    <source>
        <strain>DSM 17436 / LMG 22146 / PsJN</strain>
    </source>
</reference>
<name>RECR_PARPJ</name>
<organism>
    <name type="scientific">Paraburkholderia phytofirmans (strain DSM 17436 / LMG 22146 / PsJN)</name>
    <name type="common">Burkholderia phytofirmans</name>
    <dbReference type="NCBI Taxonomy" id="398527"/>
    <lineage>
        <taxon>Bacteria</taxon>
        <taxon>Pseudomonadati</taxon>
        <taxon>Pseudomonadota</taxon>
        <taxon>Betaproteobacteria</taxon>
        <taxon>Burkholderiales</taxon>
        <taxon>Burkholderiaceae</taxon>
        <taxon>Paraburkholderia</taxon>
    </lineage>
</organism>
<sequence length="198" mass="21869">MKQPSALSALVEALRALPGVGPKSAQRMAYHLMQHDRDGAEKLGRSLLFATEHLQHCEKCNTFTEAQICEVCLDEERDPTLLCVVETPADQIMLEQTMTYRGLYFVLMGRLSPLDGIGPKEIHFDRLVRRASDGVIKEVVLATNFTNEGEATAHYLGQTLKARGLAVTRLARGVPVGGELEYVDAGTIARAMLDRRSM</sequence>
<dbReference type="EMBL" id="CP001052">
    <property type="protein sequence ID" value="ACD16236.1"/>
    <property type="molecule type" value="Genomic_DNA"/>
</dbReference>
<dbReference type="RefSeq" id="WP_012432839.1">
    <property type="nucleotide sequence ID" value="NC_010681.1"/>
</dbReference>
<dbReference type="SMR" id="B2T3S5"/>
<dbReference type="STRING" id="398527.Bphyt_1828"/>
<dbReference type="KEGG" id="bpy:Bphyt_1828"/>
<dbReference type="eggNOG" id="COG0353">
    <property type="taxonomic scope" value="Bacteria"/>
</dbReference>
<dbReference type="HOGENOM" id="CLU_060739_1_2_4"/>
<dbReference type="OrthoDB" id="9802672at2"/>
<dbReference type="Proteomes" id="UP000001739">
    <property type="component" value="Chromosome 1"/>
</dbReference>
<dbReference type="GO" id="GO:0003677">
    <property type="term" value="F:DNA binding"/>
    <property type="evidence" value="ECO:0007669"/>
    <property type="project" value="UniProtKB-UniRule"/>
</dbReference>
<dbReference type="GO" id="GO:0008270">
    <property type="term" value="F:zinc ion binding"/>
    <property type="evidence" value="ECO:0007669"/>
    <property type="project" value="UniProtKB-KW"/>
</dbReference>
<dbReference type="GO" id="GO:0006310">
    <property type="term" value="P:DNA recombination"/>
    <property type="evidence" value="ECO:0007669"/>
    <property type="project" value="UniProtKB-UniRule"/>
</dbReference>
<dbReference type="GO" id="GO:0006281">
    <property type="term" value="P:DNA repair"/>
    <property type="evidence" value="ECO:0007669"/>
    <property type="project" value="UniProtKB-UniRule"/>
</dbReference>
<dbReference type="CDD" id="cd01025">
    <property type="entry name" value="TOPRIM_recR"/>
    <property type="match status" value="1"/>
</dbReference>
<dbReference type="Gene3D" id="3.40.1360.10">
    <property type="match status" value="1"/>
</dbReference>
<dbReference type="Gene3D" id="6.10.250.240">
    <property type="match status" value="1"/>
</dbReference>
<dbReference type="Gene3D" id="1.10.8.420">
    <property type="entry name" value="RecR Domain 1"/>
    <property type="match status" value="1"/>
</dbReference>
<dbReference type="HAMAP" id="MF_00017">
    <property type="entry name" value="RecR"/>
    <property type="match status" value="1"/>
</dbReference>
<dbReference type="InterPro" id="IPR000093">
    <property type="entry name" value="DNA_Rcmb_RecR"/>
</dbReference>
<dbReference type="InterPro" id="IPR023627">
    <property type="entry name" value="Rcmb_RecR"/>
</dbReference>
<dbReference type="InterPro" id="IPR015967">
    <property type="entry name" value="Rcmb_RecR_Znf"/>
</dbReference>
<dbReference type="InterPro" id="IPR006171">
    <property type="entry name" value="TOPRIM_dom"/>
</dbReference>
<dbReference type="InterPro" id="IPR034137">
    <property type="entry name" value="TOPRIM_RecR"/>
</dbReference>
<dbReference type="NCBIfam" id="TIGR00615">
    <property type="entry name" value="recR"/>
    <property type="match status" value="1"/>
</dbReference>
<dbReference type="PANTHER" id="PTHR30446">
    <property type="entry name" value="RECOMBINATION PROTEIN RECR"/>
    <property type="match status" value="1"/>
</dbReference>
<dbReference type="PANTHER" id="PTHR30446:SF0">
    <property type="entry name" value="RECOMBINATION PROTEIN RECR"/>
    <property type="match status" value="1"/>
</dbReference>
<dbReference type="Pfam" id="PF21175">
    <property type="entry name" value="RecR_C"/>
    <property type="match status" value="1"/>
</dbReference>
<dbReference type="Pfam" id="PF21176">
    <property type="entry name" value="RecR_HhH"/>
    <property type="match status" value="1"/>
</dbReference>
<dbReference type="Pfam" id="PF02132">
    <property type="entry name" value="RecR_ZnF"/>
    <property type="match status" value="1"/>
</dbReference>
<dbReference type="Pfam" id="PF13662">
    <property type="entry name" value="Toprim_4"/>
    <property type="match status" value="1"/>
</dbReference>
<dbReference type="SMART" id="SM00493">
    <property type="entry name" value="TOPRIM"/>
    <property type="match status" value="1"/>
</dbReference>
<dbReference type="SUPFAM" id="SSF111304">
    <property type="entry name" value="Recombination protein RecR"/>
    <property type="match status" value="1"/>
</dbReference>
<dbReference type="PROSITE" id="PS01300">
    <property type="entry name" value="RECR"/>
    <property type="match status" value="1"/>
</dbReference>
<dbReference type="PROSITE" id="PS50880">
    <property type="entry name" value="TOPRIM"/>
    <property type="match status" value="1"/>
</dbReference>
<proteinExistence type="inferred from homology"/>
<feature type="chain" id="PRO_1000089712" description="Recombination protein RecR">
    <location>
        <begin position="1"/>
        <end position="198"/>
    </location>
</feature>
<feature type="domain" description="Toprim" evidence="1">
    <location>
        <begin position="80"/>
        <end position="175"/>
    </location>
</feature>
<feature type="zinc finger region" description="C4-type" evidence="1">
    <location>
        <begin position="57"/>
        <end position="72"/>
    </location>
</feature>
<keyword id="KW-0227">DNA damage</keyword>
<keyword id="KW-0233">DNA recombination</keyword>
<keyword id="KW-0234">DNA repair</keyword>
<keyword id="KW-0479">Metal-binding</keyword>
<keyword id="KW-0862">Zinc</keyword>
<keyword id="KW-0863">Zinc-finger</keyword>
<comment type="function">
    <text evidence="1">May play a role in DNA repair. It seems to be involved in an RecBC-independent recombinational process of DNA repair. It may act with RecF and RecO.</text>
</comment>
<comment type="similarity">
    <text evidence="1">Belongs to the RecR family.</text>
</comment>
<gene>
    <name evidence="1" type="primary">recR</name>
    <name type="ordered locus">Bphyt_1828</name>
</gene>
<evidence type="ECO:0000255" key="1">
    <source>
        <dbReference type="HAMAP-Rule" id="MF_00017"/>
    </source>
</evidence>
<accession>B2T3S5</accession>